<sequence>MAARGRLVVARGNRSFSSIIRKYSLKRETNKKVIKNVIKLLTMVILMGTVVIWIMMPTSTYKKIWLKSMRAKLGKSIYFGKPGVNLLVYMFPMILLASLGSIYLHLKKQTRVNQFNSRMDRKKIDKFGALKRPMLVKAGLGIVTVTEVMFLMMFMALLLWSLANYFYHTFVTITPQSLPTDGDNLWQARLDSIAVRLGLTGNICLGFLFYPVARGSSLLAAVGLTSESSTKYHIWLGNLVMTLFTSHGLCYCIYWISTNQVSQMLEWDRTGISHLAGEIALVAGLLMWATTFPAIRRRFFEVFFYTHYLYMVFMLFFVFHVGISYALISFPGFYIFMVDRFLRFLQSRNNVKLVSARVLPCETVELNFSKNPMLMYSPTSILFVNIPSISKLQWHPFTITSSSKLEPKKLSVMIKSQGKWSSKLHHMLASSNQIDHLAVSVEGPYGPASTDYLRHDSLVMVSGGSGITPFISIIRDLLYVSSTNAYKTPKITLICAFKNSSDLSMLNLILPNSTEISSFIDIQIKAFVTREKVSTCNMNIIKTLSFKPYVSDQPISPILGPNSWLWLATILSSSFMIFIIIIAIISRYHIYPIDQSSKEYTSAYTSLIYLLAISISVVATSTVAMLCNKKSYFKGLYQNVDALSPLMIESSPDQLLPEFTNIHYGERPNLNKLLVGLKGSSVGVLVCGPRKMREEVAKICSFGSAANLQFESISFNW</sequence>
<protein>
    <recommendedName>
        <fullName>Ferric reduction oxidase 3, mitochondrial</fullName>
        <shortName>AtFRO3</shortName>
        <ecNumber>1.16.1.7</ecNumber>
    </recommendedName>
    <alternativeName>
        <fullName>Ferric-chelate reductase 3</fullName>
    </alternativeName>
</protein>
<accession>F4I4K7</accession>
<accession>F4I4K6</accession>
<accession>O23122</accession>
<evidence type="ECO:0000250" key="1"/>
<evidence type="ECO:0000255" key="2"/>
<evidence type="ECO:0000255" key="3">
    <source>
        <dbReference type="PROSITE-ProRule" id="PRU00716"/>
    </source>
</evidence>
<evidence type="ECO:0000269" key="4">
    <source>
    </source>
</evidence>
<evidence type="ECO:0000269" key="5">
    <source>
    </source>
</evidence>
<evidence type="ECO:0000269" key="6">
    <source>
    </source>
</evidence>
<evidence type="ECO:0000305" key="7"/>
<gene>
    <name type="primary">FRO3</name>
    <name type="synonym">FROHC</name>
    <name type="ordered locus">At1g23020</name>
    <name type="ORF">F19G10.4</name>
</gene>
<proteinExistence type="evidence at transcript level"/>
<comment type="function">
    <text evidence="4">Ferric chelate reductase involved in iron reduction in roots. May participate in the transport of electrons to a Fe(3+) ion via FAD and heme intermediates.</text>
</comment>
<comment type="catalytic activity">
    <reaction>
        <text>2 a Fe(II)-siderophore + NAD(+) + H(+) = 2 a Fe(III)-siderophore + NADH</text>
        <dbReference type="Rhea" id="RHEA:15061"/>
        <dbReference type="Rhea" id="RHEA-COMP:11342"/>
        <dbReference type="Rhea" id="RHEA-COMP:11344"/>
        <dbReference type="ChEBI" id="CHEBI:15378"/>
        <dbReference type="ChEBI" id="CHEBI:29033"/>
        <dbReference type="ChEBI" id="CHEBI:29034"/>
        <dbReference type="ChEBI" id="CHEBI:57540"/>
        <dbReference type="ChEBI" id="CHEBI:57945"/>
        <dbReference type="EC" id="1.16.1.7"/>
    </reaction>
</comment>
<comment type="cofactor">
    <cofactor evidence="7">
        <name>FAD</name>
        <dbReference type="ChEBI" id="CHEBI:57692"/>
    </cofactor>
</comment>
<comment type="subcellular location">
    <subcellularLocation>
        <location evidence="7">Mitochondrion membrane</location>
        <topology evidence="7">Multi-pass membrane protein</topology>
    </subcellularLocation>
</comment>
<comment type="alternative products">
    <event type="alternative splicing"/>
    <isoform>
        <id>F4I4K7-1</id>
        <name>1</name>
        <sequence type="displayed"/>
    </isoform>
    <isoform>
        <id>F4I4K7-2</id>
        <name>2</name>
        <sequence type="described" ref="VSP_041873"/>
    </isoform>
    <isoform>
        <id>F4I4K7-3</id>
        <name>3</name>
        <sequence type="described" ref="VSP_041872 VSP_041873"/>
    </isoform>
</comment>
<comment type="tissue specificity">
    <text evidence="4 5 6">Expressed in root steele. Detected in shoots, leaves, stems, siliques, flowers and cotyledons.</text>
</comment>
<comment type="induction">
    <text evidence="4 5 6">Up-regulated in roots and shoots by iron deficiency and copper deficiency.</text>
</comment>
<comment type="miscellaneous">
    <text>It is not clear whether or not FRO3 functions in iron import to mitochondria or is involved in iron efflux to the cytosol.</text>
</comment>
<comment type="miscellaneous">
    <molecule>Isoform 3</molecule>
    <text evidence="7">May be due to intron retention.</text>
</comment>
<comment type="similarity">
    <text evidence="7">Belongs to the ferric reductase (FRE) family.</text>
</comment>
<keyword id="KW-0025">Alternative splicing</keyword>
<keyword id="KW-0249">Electron transport</keyword>
<keyword id="KW-0274">FAD</keyword>
<keyword id="KW-0285">Flavoprotein</keyword>
<keyword id="KW-0349">Heme</keyword>
<keyword id="KW-0406">Ion transport</keyword>
<keyword id="KW-0408">Iron</keyword>
<keyword id="KW-0472">Membrane</keyword>
<keyword id="KW-0479">Metal-binding</keyword>
<keyword id="KW-0496">Mitochondrion</keyword>
<keyword id="KW-0520">NAD</keyword>
<keyword id="KW-0560">Oxidoreductase</keyword>
<keyword id="KW-1185">Reference proteome</keyword>
<keyword id="KW-0809">Transit peptide</keyword>
<keyword id="KW-0812">Transmembrane</keyword>
<keyword id="KW-1133">Transmembrane helix</keyword>
<keyword id="KW-0813">Transport</keyword>
<name>FRO3_ARATH</name>
<feature type="transit peptide" description="Mitochondrion" evidence="2">
    <location>
        <begin position="1"/>
        <end position="23"/>
    </location>
</feature>
<feature type="chain" id="PRO_0000413201" description="Ferric reduction oxidase 3, mitochondrial">
    <location>
        <begin position="24"/>
        <end position="717"/>
    </location>
</feature>
<feature type="transmembrane region" description="Helical" evidence="1">
    <location>
        <begin position="40"/>
        <end position="59"/>
    </location>
</feature>
<feature type="transmembrane region" description="Helical" evidence="1">
    <location>
        <begin position="86"/>
        <end position="104"/>
    </location>
</feature>
<feature type="transmembrane region" description="Helical" evidence="1">
    <location>
        <begin position="140"/>
        <end position="163"/>
    </location>
</feature>
<feature type="transmembrane region" description="Helical" evidence="1">
    <location>
        <begin position="232"/>
        <end position="255"/>
    </location>
</feature>
<feature type="transmembrane region" description="Helical" evidence="1">
    <location>
        <begin position="306"/>
        <end position="330"/>
    </location>
</feature>
<feature type="transmembrane region" description="Helical" evidence="1">
    <location>
        <begin position="353"/>
        <end position="373"/>
    </location>
</feature>
<feature type="transmembrane region" description="Helical" evidence="1">
    <location>
        <begin position="564"/>
        <end position="586"/>
    </location>
</feature>
<feature type="transmembrane region" description="Helical" evidence="1">
    <location>
        <begin position="606"/>
        <end position="627"/>
    </location>
</feature>
<feature type="domain" description="Ferric oxidoreductase">
    <location>
        <begin position="198"/>
        <end position="317"/>
    </location>
</feature>
<feature type="domain" description="FAD-binding FR-type" evidence="3">
    <location>
        <begin position="346"/>
        <end position="451"/>
    </location>
</feature>
<feature type="binding site" description="axial binding residue" evidence="7">
    <location>
        <position position="233"/>
    </location>
    <ligand>
        <name>heme</name>
        <dbReference type="ChEBI" id="CHEBI:30413"/>
    </ligand>
    <ligandPart>
        <name>Fe</name>
        <dbReference type="ChEBI" id="CHEBI:18248"/>
    </ligandPart>
</feature>
<feature type="binding site" description="axial binding residue" evidence="7">
    <location>
        <position position="247"/>
    </location>
    <ligand>
        <name>heme</name>
        <dbReference type="ChEBI" id="CHEBI:30413"/>
    </ligand>
    <ligandPart>
        <name>Fe</name>
        <dbReference type="ChEBI" id="CHEBI:18248"/>
    </ligandPart>
</feature>
<feature type="binding site" description="axial binding residue" evidence="7">
    <location>
        <position position="307"/>
    </location>
    <ligand>
        <name>heme</name>
        <dbReference type="ChEBI" id="CHEBI:30413"/>
    </ligand>
    <ligandPart>
        <name>Fe</name>
        <dbReference type="ChEBI" id="CHEBI:18248"/>
    </ligandPart>
</feature>
<feature type="binding site" description="axial binding residue" evidence="7">
    <location>
        <position position="320"/>
    </location>
    <ligand>
        <name>heme</name>
        <dbReference type="ChEBI" id="CHEBI:30413"/>
    </ligand>
    <ligandPart>
        <name>Fe</name>
        <dbReference type="ChEBI" id="CHEBI:18248"/>
    </ligandPart>
</feature>
<feature type="binding site" evidence="2">
    <location>
        <begin position="395"/>
        <end position="398"/>
    </location>
    <ligand>
        <name>FAD</name>
        <dbReference type="ChEBI" id="CHEBI:57692"/>
    </ligand>
</feature>
<feature type="binding site" evidence="2">
    <location>
        <begin position="443"/>
        <end position="446"/>
    </location>
    <ligand>
        <name>NAD(+)</name>
        <dbReference type="ChEBI" id="CHEBI:57540"/>
    </ligand>
</feature>
<feature type="splice variant" id="VSP_041872" description="In isoform 3." evidence="7">
    <original>MAARGRLVVARGNRSFSSIIRKYSLKR</original>
    <variation>MVLG</variation>
    <location>
        <begin position="1"/>
        <end position="27"/>
    </location>
</feature>
<feature type="splice variant" id="VSP_041873" description="In isoform 2 and isoform 3." evidence="7">
    <location>
        <position position="117"/>
    </location>
</feature>
<dbReference type="EC" id="1.16.1.7"/>
<dbReference type="EMBL" id="AF000657">
    <property type="protein sequence ID" value="AAB72168.1"/>
    <property type="molecule type" value="Genomic_DNA"/>
</dbReference>
<dbReference type="EMBL" id="CP002684">
    <property type="protein sequence ID" value="AEE30322.1"/>
    <property type="molecule type" value="Genomic_DNA"/>
</dbReference>
<dbReference type="EMBL" id="CP002684">
    <property type="protein sequence ID" value="AEE30323.1"/>
    <property type="molecule type" value="Genomic_DNA"/>
</dbReference>
<dbReference type="EMBL" id="CP002684">
    <property type="protein sequence ID" value="ANM59873.1"/>
    <property type="molecule type" value="Genomic_DNA"/>
</dbReference>
<dbReference type="EMBL" id="CP002684">
    <property type="protein sequence ID" value="ANM59874.1"/>
    <property type="molecule type" value="Genomic_DNA"/>
</dbReference>
<dbReference type="EMBL" id="CP002684">
    <property type="protein sequence ID" value="ANM59875.1"/>
    <property type="molecule type" value="Genomic_DNA"/>
</dbReference>
<dbReference type="PIR" id="C86364">
    <property type="entry name" value="C86364"/>
</dbReference>
<dbReference type="RefSeq" id="NP_001185067.1">
    <molecule id="F4I4K7-1"/>
    <property type="nucleotide sequence ID" value="NM_001198138.1"/>
</dbReference>
<dbReference type="RefSeq" id="NP_001319065.1">
    <molecule id="F4I4K7-2"/>
    <property type="nucleotide sequence ID" value="NM_001332575.1"/>
</dbReference>
<dbReference type="RefSeq" id="NP_001322197.1">
    <molecule id="F4I4K7-3"/>
    <property type="nucleotide sequence ID" value="NM_001332576.1"/>
</dbReference>
<dbReference type="RefSeq" id="NP_001322198.1">
    <molecule id="F4I4K7-3"/>
    <property type="nucleotide sequence ID" value="NM_001332577.1"/>
</dbReference>
<dbReference type="RefSeq" id="NP_173715.2">
    <molecule id="F4I4K7-2"/>
    <property type="nucleotide sequence ID" value="NM_102150.4"/>
</dbReference>
<dbReference type="SMR" id="F4I4K7"/>
<dbReference type="FunCoup" id="F4I4K7">
    <property type="interactions" value="32"/>
</dbReference>
<dbReference type="STRING" id="3702.F4I4K7"/>
<dbReference type="PaxDb" id="3702-AT1G23020.2"/>
<dbReference type="ProteomicsDB" id="248553">
    <molecule id="F4I4K7-1"/>
</dbReference>
<dbReference type="EnsemblPlants" id="AT1G23020.1">
    <molecule id="F4I4K7-2"/>
    <property type="protein sequence ID" value="AT1G23020.1"/>
    <property type="gene ID" value="AT1G23020"/>
</dbReference>
<dbReference type="EnsemblPlants" id="AT1G23020.2">
    <molecule id="F4I4K7-1"/>
    <property type="protein sequence ID" value="AT1G23020.2"/>
    <property type="gene ID" value="AT1G23020"/>
</dbReference>
<dbReference type="EnsemblPlants" id="AT1G23020.3">
    <molecule id="F4I4K7-3"/>
    <property type="protein sequence ID" value="AT1G23020.3"/>
    <property type="gene ID" value="AT1G23020"/>
</dbReference>
<dbReference type="EnsemblPlants" id="AT1G23020.4">
    <molecule id="F4I4K7-3"/>
    <property type="protein sequence ID" value="AT1G23020.4"/>
    <property type="gene ID" value="AT1G23020"/>
</dbReference>
<dbReference type="EnsemblPlants" id="AT1G23020.5">
    <molecule id="F4I4K7-2"/>
    <property type="protein sequence ID" value="AT1G23020.5"/>
    <property type="gene ID" value="AT1G23020"/>
</dbReference>
<dbReference type="GeneID" id="838910"/>
<dbReference type="Gramene" id="AT1G23020.1">
    <molecule id="F4I4K7-2"/>
    <property type="protein sequence ID" value="AT1G23020.1"/>
    <property type="gene ID" value="AT1G23020"/>
</dbReference>
<dbReference type="Gramene" id="AT1G23020.2">
    <molecule id="F4I4K7-1"/>
    <property type="protein sequence ID" value="AT1G23020.2"/>
    <property type="gene ID" value="AT1G23020"/>
</dbReference>
<dbReference type="Gramene" id="AT1G23020.3">
    <molecule id="F4I4K7-3"/>
    <property type="protein sequence ID" value="AT1G23020.3"/>
    <property type="gene ID" value="AT1G23020"/>
</dbReference>
<dbReference type="Gramene" id="AT1G23020.4">
    <molecule id="F4I4K7-3"/>
    <property type="protein sequence ID" value="AT1G23020.4"/>
    <property type="gene ID" value="AT1G23020"/>
</dbReference>
<dbReference type="Gramene" id="AT1G23020.5">
    <molecule id="F4I4K7-2"/>
    <property type="protein sequence ID" value="AT1G23020.5"/>
    <property type="gene ID" value="AT1G23020"/>
</dbReference>
<dbReference type="KEGG" id="ath:AT1G23020"/>
<dbReference type="Araport" id="AT1G23020"/>
<dbReference type="TAIR" id="AT1G23020">
    <property type="gene designation" value="FRO3"/>
</dbReference>
<dbReference type="eggNOG" id="KOG0039">
    <property type="taxonomic scope" value="Eukaryota"/>
</dbReference>
<dbReference type="InParanoid" id="F4I4K7"/>
<dbReference type="OMA" id="GMFTHID"/>
<dbReference type="BRENDA" id="1.16.1.10">
    <property type="organism ID" value="399"/>
</dbReference>
<dbReference type="PRO" id="PR:F4I4K7"/>
<dbReference type="Proteomes" id="UP000006548">
    <property type="component" value="Chromosome 1"/>
</dbReference>
<dbReference type="ExpressionAtlas" id="F4I4K7">
    <property type="expression patterns" value="baseline and differential"/>
</dbReference>
<dbReference type="GO" id="GO:0031966">
    <property type="term" value="C:mitochondrial membrane"/>
    <property type="evidence" value="ECO:0007669"/>
    <property type="project" value="UniProtKB-SubCell"/>
</dbReference>
<dbReference type="GO" id="GO:0140618">
    <property type="term" value="F:ferric-chelate reductase (NADH) activity"/>
    <property type="evidence" value="ECO:0007669"/>
    <property type="project" value="UniProtKB-EC"/>
</dbReference>
<dbReference type="GO" id="GO:0000293">
    <property type="term" value="F:ferric-chelate reductase activity"/>
    <property type="evidence" value="ECO:0000314"/>
    <property type="project" value="TAIR"/>
</dbReference>
<dbReference type="GO" id="GO:0046872">
    <property type="term" value="F:metal ion binding"/>
    <property type="evidence" value="ECO:0007669"/>
    <property type="project" value="UniProtKB-KW"/>
</dbReference>
<dbReference type="GO" id="GO:0006811">
    <property type="term" value="P:monoatomic ion transport"/>
    <property type="evidence" value="ECO:0007669"/>
    <property type="project" value="UniProtKB-KW"/>
</dbReference>
<dbReference type="CDD" id="cd06186">
    <property type="entry name" value="NOX_Duox_like_FAD_NADP"/>
    <property type="match status" value="1"/>
</dbReference>
<dbReference type="FunFam" id="3.40.50.80:FF:000039">
    <property type="entry name" value="Ferric reduction oxidase 3"/>
    <property type="match status" value="1"/>
</dbReference>
<dbReference type="Gene3D" id="3.40.50.80">
    <property type="entry name" value="Nucleotide-binding domain of ferredoxin-NADP reductase (FNR) module"/>
    <property type="match status" value="2"/>
</dbReference>
<dbReference type="InterPro" id="IPR013112">
    <property type="entry name" value="FAD-bd_8"/>
</dbReference>
<dbReference type="InterPro" id="IPR017927">
    <property type="entry name" value="FAD-bd_FR_type"/>
</dbReference>
<dbReference type="InterPro" id="IPR013130">
    <property type="entry name" value="Fe3_Rdtase_TM_dom"/>
</dbReference>
<dbReference type="InterPro" id="IPR013121">
    <property type="entry name" value="Fe_red_NAD-bd_6"/>
</dbReference>
<dbReference type="InterPro" id="IPR039261">
    <property type="entry name" value="FNR_nucleotide-bd"/>
</dbReference>
<dbReference type="InterPro" id="IPR050369">
    <property type="entry name" value="RBOH/FRE"/>
</dbReference>
<dbReference type="PANTHER" id="PTHR11972:SF148">
    <property type="entry name" value="FERRIC REDUCTION OXIDASE 3, MITOCHONDRIAL-RELATED"/>
    <property type="match status" value="1"/>
</dbReference>
<dbReference type="PANTHER" id="PTHR11972">
    <property type="entry name" value="NADPH OXIDASE"/>
    <property type="match status" value="1"/>
</dbReference>
<dbReference type="Pfam" id="PF08022">
    <property type="entry name" value="FAD_binding_8"/>
    <property type="match status" value="1"/>
</dbReference>
<dbReference type="Pfam" id="PF01794">
    <property type="entry name" value="Ferric_reduct"/>
    <property type="match status" value="1"/>
</dbReference>
<dbReference type="Pfam" id="PF08030">
    <property type="entry name" value="NAD_binding_6"/>
    <property type="match status" value="1"/>
</dbReference>
<dbReference type="SFLD" id="SFLDS00052">
    <property type="entry name" value="Ferric_Reductase_Domain"/>
    <property type="match status" value="1"/>
</dbReference>
<dbReference type="SFLD" id="SFLDG01168">
    <property type="entry name" value="Ferric_reductase_subgroup_(FRE"/>
    <property type="match status" value="1"/>
</dbReference>
<dbReference type="SUPFAM" id="SSF52343">
    <property type="entry name" value="Ferredoxin reductase-like, C-terminal NADP-linked domain"/>
    <property type="match status" value="1"/>
</dbReference>
<dbReference type="PROSITE" id="PS51384">
    <property type="entry name" value="FAD_FR"/>
    <property type="match status" value="1"/>
</dbReference>
<reference key="1">
    <citation type="journal article" date="2005" name="Plant Cell Physiol.">
        <title>Molecular and biochemical characterization of the Fe(III) chelate reductase gene family in Arabidopsis thaliana.</title>
        <authorList>
            <person name="Wu H."/>
            <person name="Li L."/>
            <person name="Du J."/>
            <person name="Yuan Y."/>
            <person name="Cheng X."/>
            <person name="Ling H.Q."/>
        </authorList>
    </citation>
    <scope>NUCLEOTIDE SEQUENCE [MRNA]</scope>
    <scope>FUNCTION</scope>
    <scope>TISSUE SPECIFICITY</scope>
    <scope>INDUCTION BY IRON</scope>
</reference>
<reference key="2">
    <citation type="journal article" date="2000" name="Nature">
        <title>Sequence and analysis of chromosome 1 of the plant Arabidopsis thaliana.</title>
        <authorList>
            <person name="Theologis A."/>
            <person name="Ecker J.R."/>
            <person name="Palm C.J."/>
            <person name="Federspiel N.A."/>
            <person name="Kaul S."/>
            <person name="White O."/>
            <person name="Alonso J."/>
            <person name="Altafi H."/>
            <person name="Araujo R."/>
            <person name="Bowman C.L."/>
            <person name="Brooks S.Y."/>
            <person name="Buehler E."/>
            <person name="Chan A."/>
            <person name="Chao Q."/>
            <person name="Chen H."/>
            <person name="Cheuk R.F."/>
            <person name="Chin C.W."/>
            <person name="Chung M.K."/>
            <person name="Conn L."/>
            <person name="Conway A.B."/>
            <person name="Conway A.R."/>
            <person name="Creasy T.H."/>
            <person name="Dewar K."/>
            <person name="Dunn P."/>
            <person name="Etgu P."/>
            <person name="Feldblyum T.V."/>
            <person name="Feng J.-D."/>
            <person name="Fong B."/>
            <person name="Fujii C.Y."/>
            <person name="Gill J.E."/>
            <person name="Goldsmith A.D."/>
            <person name="Haas B."/>
            <person name="Hansen N.F."/>
            <person name="Hughes B."/>
            <person name="Huizar L."/>
            <person name="Hunter J.L."/>
            <person name="Jenkins J."/>
            <person name="Johnson-Hopson C."/>
            <person name="Khan S."/>
            <person name="Khaykin E."/>
            <person name="Kim C.J."/>
            <person name="Koo H.L."/>
            <person name="Kremenetskaia I."/>
            <person name="Kurtz D.B."/>
            <person name="Kwan A."/>
            <person name="Lam B."/>
            <person name="Langin-Hooper S."/>
            <person name="Lee A."/>
            <person name="Lee J.M."/>
            <person name="Lenz C.A."/>
            <person name="Li J.H."/>
            <person name="Li Y.-P."/>
            <person name="Lin X."/>
            <person name="Liu S.X."/>
            <person name="Liu Z.A."/>
            <person name="Luros J.S."/>
            <person name="Maiti R."/>
            <person name="Marziali A."/>
            <person name="Militscher J."/>
            <person name="Miranda M."/>
            <person name="Nguyen M."/>
            <person name="Nierman W.C."/>
            <person name="Osborne B.I."/>
            <person name="Pai G."/>
            <person name="Peterson J."/>
            <person name="Pham P.K."/>
            <person name="Rizzo M."/>
            <person name="Rooney T."/>
            <person name="Rowley D."/>
            <person name="Sakano H."/>
            <person name="Salzberg S.L."/>
            <person name="Schwartz J.R."/>
            <person name="Shinn P."/>
            <person name="Southwick A.M."/>
            <person name="Sun H."/>
            <person name="Tallon L.J."/>
            <person name="Tambunga G."/>
            <person name="Toriumi M.J."/>
            <person name="Town C.D."/>
            <person name="Utterback T."/>
            <person name="Van Aken S."/>
            <person name="Vaysberg M."/>
            <person name="Vysotskaia V.S."/>
            <person name="Walker M."/>
            <person name="Wu D."/>
            <person name="Yu G."/>
            <person name="Fraser C.M."/>
            <person name="Venter J.C."/>
            <person name="Davis R.W."/>
        </authorList>
    </citation>
    <scope>NUCLEOTIDE SEQUENCE [LARGE SCALE GENOMIC DNA]</scope>
    <source>
        <strain>cv. Columbia</strain>
    </source>
</reference>
<reference key="3">
    <citation type="journal article" date="2017" name="Plant J.">
        <title>Araport11: a complete reannotation of the Arabidopsis thaliana reference genome.</title>
        <authorList>
            <person name="Cheng C.Y."/>
            <person name="Krishnakumar V."/>
            <person name="Chan A.P."/>
            <person name="Thibaud-Nissen F."/>
            <person name="Schobel S."/>
            <person name="Town C.D."/>
        </authorList>
    </citation>
    <scope>GENOME REANNOTATION</scope>
    <source>
        <strain>cv. Columbia</strain>
    </source>
</reference>
<reference key="4">
    <citation type="journal article" date="2006" name="Planta">
        <title>Expression profiling of the Arabidopsis ferric chelate reductase (FRO) gene family reveals differential regulation by iron and copper.</title>
        <authorList>
            <person name="Mukherjee I."/>
            <person name="Campbell N.H."/>
            <person name="Ash J.S."/>
            <person name="Connolly E.L."/>
        </authorList>
    </citation>
    <scope>TISSUE SPECIFICITY</scope>
    <scope>INDUCTION BY IRON AND COPPER</scope>
</reference>
<reference key="5">
    <citation type="journal article" date="2008" name="Science">
        <title>Cell identity mediates the response of Arabidopsis roots to abiotic stress.</title>
        <authorList>
            <person name="Dinneny J.R."/>
            <person name="Long T.A."/>
            <person name="Wang J.Y."/>
            <person name="Jung J.W."/>
            <person name="Mace D."/>
            <person name="Pointer S."/>
            <person name="Barron C."/>
            <person name="Brady S.M."/>
            <person name="Schiefelbein J."/>
            <person name="Benfey P.N."/>
        </authorList>
    </citation>
    <scope>TISSUE SPECIFICITY</scope>
    <scope>INDUCTION BY IRON</scope>
</reference>
<reference key="6">
    <citation type="journal article" date="2009" name="Plant Sci.">
        <title>Iron uptake mechanisms in plants: Functions of the FRO family of ferric reductases.</title>
        <authorList>
            <person name="Jeong J."/>
            <person name="Connolly E.L."/>
        </authorList>
    </citation>
    <scope>GENE FAMILY</scope>
    <scope>NOMENCLATURE</scope>
    <scope>SUBCELLULAR LOCATION</scope>
</reference>
<organism>
    <name type="scientific">Arabidopsis thaliana</name>
    <name type="common">Mouse-ear cress</name>
    <dbReference type="NCBI Taxonomy" id="3702"/>
    <lineage>
        <taxon>Eukaryota</taxon>
        <taxon>Viridiplantae</taxon>
        <taxon>Streptophyta</taxon>
        <taxon>Embryophyta</taxon>
        <taxon>Tracheophyta</taxon>
        <taxon>Spermatophyta</taxon>
        <taxon>Magnoliopsida</taxon>
        <taxon>eudicotyledons</taxon>
        <taxon>Gunneridae</taxon>
        <taxon>Pentapetalae</taxon>
        <taxon>rosids</taxon>
        <taxon>malvids</taxon>
        <taxon>Brassicales</taxon>
        <taxon>Brassicaceae</taxon>
        <taxon>Camelineae</taxon>
        <taxon>Arabidopsis</taxon>
    </lineage>
</organism>